<proteinExistence type="evidence at protein level"/>
<accession>Q0WV12</accession>
<accession>O65281</accession>
<accession>P93041</accession>
<accession>Q9SWZ6</accession>
<gene>
    <name evidence="7" type="primary">ANL2</name>
    <name evidence="9" type="ordered locus">At4g00730</name>
    <name evidence="10" type="ORF">F6N23.10</name>
</gene>
<evidence type="ECO:0000255" key="1"/>
<evidence type="ECO:0000255" key="2">
    <source>
        <dbReference type="PROSITE-ProRule" id="PRU00108"/>
    </source>
</evidence>
<evidence type="ECO:0000255" key="3">
    <source>
        <dbReference type="PROSITE-ProRule" id="PRU00197"/>
    </source>
</evidence>
<evidence type="ECO:0000256" key="4">
    <source>
        <dbReference type="SAM" id="MobiDB-lite"/>
    </source>
</evidence>
<evidence type="ECO:0000269" key="5">
    <source>
    </source>
</evidence>
<evidence type="ECO:0000269" key="6">
    <source>
    </source>
</evidence>
<evidence type="ECO:0000303" key="7">
    <source>
    </source>
</evidence>
<evidence type="ECO:0000305" key="8"/>
<evidence type="ECO:0000312" key="9">
    <source>
        <dbReference type="Araport" id="AT4G00730"/>
    </source>
</evidence>
<evidence type="ECO:0000312" key="10">
    <source>
        <dbReference type="EMBL" id="AAC13617.1"/>
    </source>
</evidence>
<sequence length="802" mass="87194">MNFGSLFDNTPGGGSTGARLLSGLSYGNHTAATNVLPGGAMAQAAAAASLFSPPLTKSVYASSGLSLALEQPERGTNRGEASMRNNNNVGGGGDTFDGSVNRRSREEEHESRSGSDNVEGISGEDQDAADKPPRKKRYHRHTPQQIQELESMFKECPHPDEKQRLELSKRLCLETRQVKFWFQNRRTQMKTQLERHENALLRQENDKLRAENMSIREAMRNPICTNCGGPAMLGDVSLEEHHLRIENARLKDELDRVCNLTGKFLGHHHNHHYNSSLELAVGTNNNGGHFAFPPDFGGGGGCLPPQQQQSTVINGIDQKSVLLELALTAMDELVKLAQSEEPLWVKSLDGERDELNQDEYMRTFSSTKPTGLATEASRTSGMVIINSLALVETLMDSNRWTEMFPCNVARATTTDVISGGMAGTINGALQLMNAELQVLSPLVPVRNVNFLRFCKQHAEGVWAVVDVSIDPVRENSGGAPVIRRLPSGCVVQDVSNGYSKVTWVEHAEYDENQIHQLYRPLLRSGLGFGSQRWLATLQRQCECLAILISSSVTSHDNTSITPGGRKSMLKLAQRMTFNFCSGISAPSVHNWSKLTVGNVDPDVRVMTRKSVDDPGEPPGIVLSAATSVWLPAAPQRLYDFLRNERMRCEWDILSNGGPMQEMAHITKGQDQGVSLLRSNAMNANQSSMLILQETCIDASGALVVYAPVDIPAMHVVMNGGDSSYVALLPSGFAVLPDGGIDGGGSGDGDQRPVGGGSLLTVAFQILVNNLPTAKLTVESVETVNNLISCTVQKIRAALQCES</sequence>
<protein>
    <recommendedName>
        <fullName evidence="7">Homeobox-leucine zipper protein ANTHOCYANINLESS 2</fullName>
    </recommendedName>
    <alternativeName>
        <fullName evidence="7">HD-ZIP protein ANL2</fullName>
    </alternativeName>
    <alternativeName>
        <fullName evidence="7">Homeodomain protein AHDP</fullName>
    </alternativeName>
    <alternativeName>
        <fullName evidence="7">Homeodomain transcription factor ANL2</fullName>
    </alternativeName>
</protein>
<reference key="1">
    <citation type="journal article" date="1996" name="Plant Cell">
        <title>Identification of a meristem L1 layer-specific gene in Arabidopsis that is expressed during embryonic pattern formation and defines a new class of homeobox genes.</title>
        <authorList>
            <person name="Lu P."/>
            <person name="Porat R."/>
            <person name="Nadeau J.A."/>
            <person name="O'Neill S.D."/>
        </authorList>
    </citation>
    <scope>NUCLEOTIDE SEQUENCE [MRNA]</scope>
    <source>
        <strain>cv. Columbia</strain>
    </source>
</reference>
<reference key="2">
    <citation type="journal article" date="1999" name="Plant Cell">
        <title>ANTHOCYANINLESS2, a homeobox gene affecting anthocyanin distribution and root development in Arabidopsis.</title>
        <authorList>
            <person name="Kubo H."/>
            <person name="Peeters A.J.M."/>
            <person name="Aarts M.G.M."/>
            <person name="Pereira A."/>
            <person name="Koornneef M."/>
        </authorList>
    </citation>
    <scope>NUCLEOTIDE SEQUENCE [GENOMIC DNA]</scope>
    <scope>FUNCTION</scope>
    <scope>TISSUE SPECIFICITY</scope>
    <scope>DISRUPTION PHENOTYPE</scope>
    <source>
        <strain>cv. Landsberg erecta</strain>
    </source>
</reference>
<reference key="3">
    <citation type="journal article" date="1999" name="Nature">
        <title>Sequence and analysis of chromosome 4 of the plant Arabidopsis thaliana.</title>
        <authorList>
            <person name="Mayer K.F.X."/>
            <person name="Schueller C."/>
            <person name="Wambutt R."/>
            <person name="Murphy G."/>
            <person name="Volckaert G."/>
            <person name="Pohl T."/>
            <person name="Duesterhoeft A."/>
            <person name="Stiekema W."/>
            <person name="Entian K.-D."/>
            <person name="Terryn N."/>
            <person name="Harris B."/>
            <person name="Ansorge W."/>
            <person name="Brandt P."/>
            <person name="Grivell L.A."/>
            <person name="Rieger M."/>
            <person name="Weichselgartner M."/>
            <person name="de Simone V."/>
            <person name="Obermaier B."/>
            <person name="Mache R."/>
            <person name="Mueller M."/>
            <person name="Kreis M."/>
            <person name="Delseny M."/>
            <person name="Puigdomenech P."/>
            <person name="Watson M."/>
            <person name="Schmidtheini T."/>
            <person name="Reichert B."/>
            <person name="Portetelle D."/>
            <person name="Perez-Alonso M."/>
            <person name="Boutry M."/>
            <person name="Bancroft I."/>
            <person name="Vos P."/>
            <person name="Hoheisel J."/>
            <person name="Zimmermann W."/>
            <person name="Wedler H."/>
            <person name="Ridley P."/>
            <person name="Langham S.-A."/>
            <person name="McCullagh B."/>
            <person name="Bilham L."/>
            <person name="Robben J."/>
            <person name="van der Schueren J."/>
            <person name="Grymonprez B."/>
            <person name="Chuang Y.-J."/>
            <person name="Vandenbussche F."/>
            <person name="Braeken M."/>
            <person name="Weltjens I."/>
            <person name="Voet M."/>
            <person name="Bastiaens I."/>
            <person name="Aert R."/>
            <person name="Defoor E."/>
            <person name="Weitzenegger T."/>
            <person name="Bothe G."/>
            <person name="Ramsperger U."/>
            <person name="Hilbert H."/>
            <person name="Braun M."/>
            <person name="Holzer E."/>
            <person name="Brandt A."/>
            <person name="Peters S."/>
            <person name="van Staveren M."/>
            <person name="Dirkse W."/>
            <person name="Mooijman P."/>
            <person name="Klein Lankhorst R."/>
            <person name="Rose M."/>
            <person name="Hauf J."/>
            <person name="Koetter P."/>
            <person name="Berneiser S."/>
            <person name="Hempel S."/>
            <person name="Feldpausch M."/>
            <person name="Lamberth S."/>
            <person name="Van den Daele H."/>
            <person name="De Keyser A."/>
            <person name="Buysshaert C."/>
            <person name="Gielen J."/>
            <person name="Villarroel R."/>
            <person name="De Clercq R."/>
            <person name="van Montagu M."/>
            <person name="Rogers J."/>
            <person name="Cronin A."/>
            <person name="Quail M.A."/>
            <person name="Bray-Allen S."/>
            <person name="Clark L."/>
            <person name="Doggett J."/>
            <person name="Hall S."/>
            <person name="Kay M."/>
            <person name="Lennard N."/>
            <person name="McLay K."/>
            <person name="Mayes R."/>
            <person name="Pettett A."/>
            <person name="Rajandream M.A."/>
            <person name="Lyne M."/>
            <person name="Benes V."/>
            <person name="Rechmann S."/>
            <person name="Borkova D."/>
            <person name="Bloecker H."/>
            <person name="Scharfe M."/>
            <person name="Grimm M."/>
            <person name="Loehnert T.-H."/>
            <person name="Dose S."/>
            <person name="de Haan M."/>
            <person name="Maarse A.C."/>
            <person name="Schaefer M."/>
            <person name="Mueller-Auer S."/>
            <person name="Gabel C."/>
            <person name="Fuchs M."/>
            <person name="Fartmann B."/>
            <person name="Granderath K."/>
            <person name="Dauner D."/>
            <person name="Herzl A."/>
            <person name="Neumann S."/>
            <person name="Argiriou A."/>
            <person name="Vitale D."/>
            <person name="Liguori R."/>
            <person name="Piravandi E."/>
            <person name="Massenet O."/>
            <person name="Quigley F."/>
            <person name="Clabauld G."/>
            <person name="Muendlein A."/>
            <person name="Felber R."/>
            <person name="Schnabl S."/>
            <person name="Hiller R."/>
            <person name="Schmidt W."/>
            <person name="Lecharny A."/>
            <person name="Aubourg S."/>
            <person name="Chefdor F."/>
            <person name="Cooke R."/>
            <person name="Berger C."/>
            <person name="Monfort A."/>
            <person name="Casacuberta E."/>
            <person name="Gibbons T."/>
            <person name="Weber N."/>
            <person name="Vandenbol M."/>
            <person name="Bargues M."/>
            <person name="Terol J."/>
            <person name="Torres A."/>
            <person name="Perez-Perez A."/>
            <person name="Purnelle B."/>
            <person name="Bent E."/>
            <person name="Johnson S."/>
            <person name="Tacon D."/>
            <person name="Jesse T."/>
            <person name="Heijnen L."/>
            <person name="Schwarz S."/>
            <person name="Scholler P."/>
            <person name="Heber S."/>
            <person name="Francs P."/>
            <person name="Bielke C."/>
            <person name="Frishman D."/>
            <person name="Haase D."/>
            <person name="Lemcke K."/>
            <person name="Mewes H.-W."/>
            <person name="Stocker S."/>
            <person name="Zaccaria P."/>
            <person name="Bevan M."/>
            <person name="Wilson R.K."/>
            <person name="de la Bastide M."/>
            <person name="Habermann K."/>
            <person name="Parnell L."/>
            <person name="Dedhia N."/>
            <person name="Gnoj L."/>
            <person name="Schutz K."/>
            <person name="Huang E."/>
            <person name="Spiegel L."/>
            <person name="Sekhon M."/>
            <person name="Murray J."/>
            <person name="Sheet P."/>
            <person name="Cordes M."/>
            <person name="Abu-Threideh J."/>
            <person name="Stoneking T."/>
            <person name="Kalicki J."/>
            <person name="Graves T."/>
            <person name="Harmon G."/>
            <person name="Edwards J."/>
            <person name="Latreille P."/>
            <person name="Courtney L."/>
            <person name="Cloud J."/>
            <person name="Abbott A."/>
            <person name="Scott K."/>
            <person name="Johnson D."/>
            <person name="Minx P."/>
            <person name="Bentley D."/>
            <person name="Fulton B."/>
            <person name="Miller N."/>
            <person name="Greco T."/>
            <person name="Kemp K."/>
            <person name="Kramer J."/>
            <person name="Fulton L."/>
            <person name="Mardis E."/>
            <person name="Dante M."/>
            <person name="Pepin K."/>
            <person name="Hillier L.W."/>
            <person name="Nelson J."/>
            <person name="Spieth J."/>
            <person name="Ryan E."/>
            <person name="Andrews S."/>
            <person name="Geisel C."/>
            <person name="Layman D."/>
            <person name="Du H."/>
            <person name="Ali J."/>
            <person name="Berghoff A."/>
            <person name="Jones K."/>
            <person name="Drone K."/>
            <person name="Cotton M."/>
            <person name="Joshu C."/>
            <person name="Antonoiu B."/>
            <person name="Zidanic M."/>
            <person name="Strong C."/>
            <person name="Sun H."/>
            <person name="Lamar B."/>
            <person name="Yordan C."/>
            <person name="Ma P."/>
            <person name="Zhong J."/>
            <person name="Preston R."/>
            <person name="Vil D."/>
            <person name="Shekher M."/>
            <person name="Matero A."/>
            <person name="Shah R."/>
            <person name="Swaby I.K."/>
            <person name="O'Shaughnessy A."/>
            <person name="Rodriguez M."/>
            <person name="Hoffman J."/>
            <person name="Till S."/>
            <person name="Granat S."/>
            <person name="Shohdy N."/>
            <person name="Hasegawa A."/>
            <person name="Hameed A."/>
            <person name="Lodhi M."/>
            <person name="Johnson A."/>
            <person name="Chen E."/>
            <person name="Marra M.A."/>
            <person name="Martienssen R."/>
            <person name="McCombie W.R."/>
        </authorList>
    </citation>
    <scope>NUCLEOTIDE SEQUENCE [LARGE SCALE GENOMIC DNA]</scope>
    <source>
        <strain>cv. Columbia</strain>
    </source>
</reference>
<reference key="4">
    <citation type="journal article" date="2017" name="Plant J.">
        <title>Araport11: a complete reannotation of the Arabidopsis thaliana reference genome.</title>
        <authorList>
            <person name="Cheng C.Y."/>
            <person name="Krishnakumar V."/>
            <person name="Chan A.P."/>
            <person name="Thibaud-Nissen F."/>
            <person name="Schobel S."/>
            <person name="Town C.D."/>
        </authorList>
    </citation>
    <scope>GENOME REANNOTATION</scope>
    <source>
        <strain>cv. Columbia</strain>
    </source>
</reference>
<reference key="5">
    <citation type="submission" date="2006-07" db="EMBL/GenBank/DDBJ databases">
        <title>Large-scale analysis of RIKEN Arabidopsis full-length (RAFL) cDNAs.</title>
        <authorList>
            <person name="Totoki Y."/>
            <person name="Seki M."/>
            <person name="Ishida J."/>
            <person name="Nakajima M."/>
            <person name="Enju A."/>
            <person name="Kamiya A."/>
            <person name="Narusaka M."/>
            <person name="Shin-i T."/>
            <person name="Nakagawa M."/>
            <person name="Sakamoto N."/>
            <person name="Oishi K."/>
            <person name="Kohara Y."/>
            <person name="Kobayashi M."/>
            <person name="Toyoda A."/>
            <person name="Sakaki Y."/>
            <person name="Sakurai T."/>
            <person name="Iida K."/>
            <person name="Akiyama K."/>
            <person name="Satou M."/>
            <person name="Toyoda T."/>
            <person name="Konagaya A."/>
            <person name="Carninci P."/>
            <person name="Kawai J."/>
            <person name="Hayashizaki Y."/>
            <person name="Shinozaki K."/>
        </authorList>
    </citation>
    <scope>NUCLEOTIDE SEQUENCE [LARGE SCALE MRNA]</scope>
    <source>
        <strain>cv. Columbia</strain>
    </source>
</reference>
<reference key="6">
    <citation type="journal article" date="2000" name="Plant Mol. Biol.">
        <title>Organization and structural evolution of four multigene families in Arabidopsis thaliana: AtLCAD, AtLGT, AtMYST and AtHD-GL2.</title>
        <authorList>
            <person name="Tavares R."/>
            <person name="Aubourg S."/>
            <person name="Lecharny A."/>
            <person name="Kreis M."/>
        </authorList>
    </citation>
    <scope>GENE FAMILY</scope>
</reference>
<reference key="7">
    <citation type="journal article" date="2006" name="Plant Physiol.">
        <title>Characterization of the class IV homeodomain-leucine zipper gene family in Arabidopsis.</title>
        <authorList>
            <person name="Nakamura M."/>
            <person name="Katsumata H."/>
            <person name="Abe M."/>
            <person name="Yabe N."/>
            <person name="Komeda Y."/>
            <person name="Yamamoto K.T."/>
            <person name="Takahashi T."/>
        </authorList>
    </citation>
    <scope>GENE FAMILY</scope>
    <scope>NOMENCLATURE</scope>
</reference>
<reference key="8">
    <citation type="journal article" date="2015" name="Development">
        <title>AIL and HDG proteins act antagonistically to control cell proliferation.</title>
        <authorList>
            <person name="Horstman A."/>
            <person name="Fukuoka H."/>
            <person name="Muino J.M."/>
            <person name="Nitsch L."/>
            <person name="Guo C."/>
            <person name="Passarinho P."/>
            <person name="Sanchez-Perez G."/>
            <person name="Immink R."/>
            <person name="Angenent G."/>
            <person name="Boutilier K."/>
        </authorList>
    </citation>
    <scope>INTERACTION WITH AIL7/PLT7; ANT; BBM AND AIL1</scope>
    <source>
        <strain>cv. Columbia</strain>
    </source>
</reference>
<dbReference type="EMBL" id="U85254">
    <property type="protein sequence ID" value="AAB41901.1"/>
    <property type="status" value="ALT_SEQ"/>
    <property type="molecule type" value="mRNA"/>
</dbReference>
<dbReference type="EMBL" id="AF077335">
    <property type="protein sequence ID" value="AAD47139.1"/>
    <property type="molecule type" value="Genomic_DNA"/>
</dbReference>
<dbReference type="EMBL" id="AF058919">
    <property type="protein sequence ID" value="AAC13617.1"/>
    <property type="status" value="ALT_SEQ"/>
    <property type="molecule type" value="Genomic_DNA"/>
</dbReference>
<dbReference type="EMBL" id="AL161472">
    <property type="protein sequence ID" value="CAB80882.1"/>
    <property type="status" value="ALT_SEQ"/>
    <property type="molecule type" value="Genomic_DNA"/>
</dbReference>
<dbReference type="EMBL" id="CP002687">
    <property type="protein sequence ID" value="AEE81926.1"/>
    <property type="molecule type" value="Genomic_DNA"/>
</dbReference>
<dbReference type="EMBL" id="AK226968">
    <property type="protein sequence ID" value="BAE99036.1"/>
    <property type="molecule type" value="mRNA"/>
</dbReference>
<dbReference type="PIR" id="T01237">
    <property type="entry name" value="T01237"/>
</dbReference>
<dbReference type="RefSeq" id="NP_567183.2">
    <molecule id="Q0WV12-1"/>
    <property type="nucleotide sequence ID" value="NM_116298.4"/>
</dbReference>
<dbReference type="SMR" id="Q0WV12"/>
<dbReference type="FunCoup" id="Q0WV12">
    <property type="interactions" value="544"/>
</dbReference>
<dbReference type="IntAct" id="Q0WV12">
    <property type="interactions" value="1"/>
</dbReference>
<dbReference type="STRING" id="3702.Q0WV12"/>
<dbReference type="iPTMnet" id="Q0WV12"/>
<dbReference type="PaxDb" id="3702-AT4G00730.1"/>
<dbReference type="ProteomicsDB" id="244989">
    <molecule id="Q0WV12-1"/>
</dbReference>
<dbReference type="EnsemblPlants" id="AT4G00730.1">
    <molecule id="Q0WV12-1"/>
    <property type="protein sequence ID" value="AT4G00730.1"/>
    <property type="gene ID" value="AT4G00730"/>
</dbReference>
<dbReference type="GeneID" id="828022"/>
<dbReference type="Gramene" id="AT4G00730.1">
    <molecule id="Q0WV12-1"/>
    <property type="protein sequence ID" value="AT4G00730.1"/>
    <property type="gene ID" value="AT4G00730"/>
</dbReference>
<dbReference type="KEGG" id="ath:AT4G00730"/>
<dbReference type="Araport" id="AT4G00730"/>
<dbReference type="TAIR" id="AT4G00730">
    <property type="gene designation" value="ANL2"/>
</dbReference>
<dbReference type="eggNOG" id="ENOG502QUAY">
    <property type="taxonomic scope" value="Eukaryota"/>
</dbReference>
<dbReference type="HOGENOM" id="CLU_015002_2_1_1"/>
<dbReference type="InParanoid" id="Q0WV12"/>
<dbReference type="OMA" id="LQRQCQC"/>
<dbReference type="PhylomeDB" id="Q0WV12"/>
<dbReference type="PRO" id="PR:Q0WV12"/>
<dbReference type="Proteomes" id="UP000006548">
    <property type="component" value="Chromosome 4"/>
</dbReference>
<dbReference type="ExpressionAtlas" id="Q0WV12">
    <property type="expression patterns" value="baseline and differential"/>
</dbReference>
<dbReference type="GO" id="GO:0005634">
    <property type="term" value="C:nucleus"/>
    <property type="evidence" value="ECO:0007669"/>
    <property type="project" value="UniProtKB-SubCell"/>
</dbReference>
<dbReference type="GO" id="GO:0003700">
    <property type="term" value="F:DNA-binding transcription factor activity"/>
    <property type="evidence" value="ECO:0000250"/>
    <property type="project" value="TAIR"/>
</dbReference>
<dbReference type="GO" id="GO:0000981">
    <property type="term" value="F:DNA-binding transcription factor activity, RNA polymerase II-specific"/>
    <property type="evidence" value="ECO:0007669"/>
    <property type="project" value="InterPro"/>
</dbReference>
<dbReference type="GO" id="GO:0008289">
    <property type="term" value="F:lipid binding"/>
    <property type="evidence" value="ECO:0007669"/>
    <property type="project" value="InterPro"/>
</dbReference>
<dbReference type="GO" id="GO:0000976">
    <property type="term" value="F:transcription cis-regulatory region binding"/>
    <property type="evidence" value="ECO:0000353"/>
    <property type="project" value="TAIR"/>
</dbReference>
<dbReference type="GO" id="GO:0043481">
    <property type="term" value="P:anthocyanin accumulation in tissues in response to UV light"/>
    <property type="evidence" value="ECO:0000315"/>
    <property type="project" value="TAIR"/>
</dbReference>
<dbReference type="GO" id="GO:0006723">
    <property type="term" value="P:cuticle hydrocarbon biosynthetic process"/>
    <property type="evidence" value="ECO:0000315"/>
    <property type="project" value="TAIR"/>
</dbReference>
<dbReference type="GO" id="GO:0009827">
    <property type="term" value="P:plant-type cell wall modification"/>
    <property type="evidence" value="ECO:0000315"/>
    <property type="project" value="TAIR"/>
</dbReference>
<dbReference type="GO" id="GO:0048364">
    <property type="term" value="P:root development"/>
    <property type="evidence" value="ECO:0000315"/>
    <property type="project" value="TAIR"/>
</dbReference>
<dbReference type="GO" id="GO:0048765">
    <property type="term" value="P:root hair cell differentiation"/>
    <property type="evidence" value="ECO:0000315"/>
    <property type="project" value="TAIR"/>
</dbReference>
<dbReference type="CDD" id="cd00086">
    <property type="entry name" value="homeodomain"/>
    <property type="match status" value="1"/>
</dbReference>
<dbReference type="CDD" id="cd08875">
    <property type="entry name" value="START_ArGLABRA2_like"/>
    <property type="match status" value="1"/>
</dbReference>
<dbReference type="FunFam" id="1.10.10.60:FF:000229">
    <property type="entry name" value="Homeobox-leucine zipper protein HDG1"/>
    <property type="match status" value="1"/>
</dbReference>
<dbReference type="Gene3D" id="1.10.10.60">
    <property type="entry name" value="Homeodomain-like"/>
    <property type="match status" value="1"/>
</dbReference>
<dbReference type="InterPro" id="IPR042160">
    <property type="entry name" value="GLABRA2/ANL2/PDF2/ATML1-like"/>
</dbReference>
<dbReference type="InterPro" id="IPR001356">
    <property type="entry name" value="HD"/>
</dbReference>
<dbReference type="InterPro" id="IPR017970">
    <property type="entry name" value="Homeobox_CS"/>
</dbReference>
<dbReference type="InterPro" id="IPR009057">
    <property type="entry name" value="Homeodomain-like_sf"/>
</dbReference>
<dbReference type="InterPro" id="IPR002913">
    <property type="entry name" value="START_lipid-bd_dom"/>
</dbReference>
<dbReference type="PANTHER" id="PTHR45654:SF5">
    <property type="entry name" value="HOMEOBOX-LEUCINE ZIPPER PROTEIN ANTHOCYANINLESS 2-RELATED"/>
    <property type="match status" value="1"/>
</dbReference>
<dbReference type="PANTHER" id="PTHR45654">
    <property type="entry name" value="HOMEOBOX-LEUCINE ZIPPER PROTEIN MERISTEM L1"/>
    <property type="match status" value="1"/>
</dbReference>
<dbReference type="Pfam" id="PF00046">
    <property type="entry name" value="Homeodomain"/>
    <property type="match status" value="1"/>
</dbReference>
<dbReference type="Pfam" id="PF01852">
    <property type="entry name" value="START"/>
    <property type="match status" value="1"/>
</dbReference>
<dbReference type="SMART" id="SM00389">
    <property type="entry name" value="HOX"/>
    <property type="match status" value="1"/>
</dbReference>
<dbReference type="SMART" id="SM00234">
    <property type="entry name" value="START"/>
    <property type="match status" value="1"/>
</dbReference>
<dbReference type="SUPFAM" id="SSF55961">
    <property type="entry name" value="Bet v1-like"/>
    <property type="match status" value="2"/>
</dbReference>
<dbReference type="SUPFAM" id="SSF46689">
    <property type="entry name" value="Homeodomain-like"/>
    <property type="match status" value="1"/>
</dbReference>
<dbReference type="PROSITE" id="PS00027">
    <property type="entry name" value="HOMEOBOX_1"/>
    <property type="match status" value="1"/>
</dbReference>
<dbReference type="PROSITE" id="PS50071">
    <property type="entry name" value="HOMEOBOX_2"/>
    <property type="match status" value="1"/>
</dbReference>
<dbReference type="PROSITE" id="PS50848">
    <property type="entry name" value="START"/>
    <property type="match status" value="1"/>
</dbReference>
<comment type="function">
    <text evidence="5">Probable transcription factor involved in the regulation of the tissue-specific accumulation of anthocyanins and in cellular organization of the primary root.</text>
</comment>
<comment type="subunit">
    <text evidence="6">Interacts with AIL7/PLT7, ANT, BBM and AIL1.</text>
</comment>
<comment type="subcellular location">
    <subcellularLocation>
        <location evidence="8">Nucleus</location>
    </subcellularLocation>
</comment>
<comment type="alternative products">
    <event type="alternative splicing"/>
    <isoform>
        <id>Q0WV12-1</id>
        <name>1</name>
        <sequence type="displayed"/>
    </isoform>
    <text>A number of isoforms are produced. According to EST sequences.</text>
</comment>
<comment type="tissue specificity">
    <text evidence="5">Expressed in roots, stems, leaves and floral buds.</text>
</comment>
<comment type="disruption phenotype">
    <text evidence="5">Plants display a strong reduction of anthocyanin content on the adaxial side of rosette leaves, a slight reduction onf the abaxial side, and extra cells between cortical and epidermal layers in roots.</text>
</comment>
<comment type="similarity">
    <text evidence="8">Belongs to the HD-ZIP homeobox family. Class IV subfamily.</text>
</comment>
<comment type="sequence caution" evidence="8">
    <conflict type="erroneous initiation">
        <sequence resource="EMBL-CDS" id="AAB41901"/>
    </conflict>
    <text>Truncated N-terminus.</text>
</comment>
<comment type="sequence caution" evidence="8">
    <conflict type="frameshift">
        <sequence resource="EMBL-CDS" id="AAB41901"/>
    </conflict>
</comment>
<comment type="sequence caution" evidence="8">
    <conflict type="erroneous gene model prediction">
        <sequence resource="EMBL-CDS" id="AAC13617"/>
    </conflict>
</comment>
<comment type="sequence caution" evidence="8">
    <conflict type="erroneous gene model prediction">
        <sequence resource="EMBL-CDS" id="CAB80882"/>
    </conflict>
</comment>
<feature type="chain" id="PRO_0000331657" description="Homeobox-leucine zipper protein ANTHOCYANINLESS 2">
    <location>
        <begin position="1"/>
        <end position="802"/>
    </location>
</feature>
<feature type="domain" description="START" evidence="3">
    <location>
        <begin position="315"/>
        <end position="546"/>
    </location>
</feature>
<feature type="DNA-binding region" description="Homeobox" evidence="2">
    <location>
        <begin position="134"/>
        <end position="193"/>
    </location>
</feature>
<feature type="region of interest" description="Disordered" evidence="4">
    <location>
        <begin position="71"/>
        <end position="143"/>
    </location>
</feature>
<feature type="coiled-coil region" evidence="1">
    <location>
        <begin position="182"/>
        <end position="221"/>
    </location>
</feature>
<feature type="compositionally biased region" description="Basic and acidic residues" evidence="4">
    <location>
        <begin position="103"/>
        <end position="113"/>
    </location>
</feature>
<feature type="compositionally biased region" description="Basic residues" evidence="4">
    <location>
        <begin position="133"/>
        <end position="142"/>
    </location>
</feature>
<feature type="sequence conflict" description="In Ref. 2; AAD47139." evidence="8" ref="2">
    <location>
        <position position="286"/>
    </location>
</feature>
<feature type="sequence conflict" description="In Ref. 2; AAD47139." evidence="8" ref="2">
    <original>A</original>
    <variation>P</variation>
    <location>
        <position position="463"/>
    </location>
</feature>
<feature type="sequence conflict" description="In Ref. 2; AAD47139." evidence="8" ref="2">
    <original>I</original>
    <variation>M</variation>
    <location>
        <position position="548"/>
    </location>
</feature>
<feature type="sequence conflict" description="In Ref. 2; AAD47139." evidence="8" ref="2">
    <original>LP</original>
    <variation>SS</variation>
    <location>
        <begin position="735"/>
        <end position="736"/>
    </location>
</feature>
<feature type="sequence conflict" description="In Ref. 2; AAD47139." evidence="8" ref="2">
    <original>E</original>
    <variation>G</variation>
    <location>
        <position position="801"/>
    </location>
</feature>
<organism>
    <name type="scientific">Arabidopsis thaliana</name>
    <name type="common">Mouse-ear cress</name>
    <dbReference type="NCBI Taxonomy" id="3702"/>
    <lineage>
        <taxon>Eukaryota</taxon>
        <taxon>Viridiplantae</taxon>
        <taxon>Streptophyta</taxon>
        <taxon>Embryophyta</taxon>
        <taxon>Tracheophyta</taxon>
        <taxon>Spermatophyta</taxon>
        <taxon>Magnoliopsida</taxon>
        <taxon>eudicotyledons</taxon>
        <taxon>Gunneridae</taxon>
        <taxon>Pentapetalae</taxon>
        <taxon>rosids</taxon>
        <taxon>malvids</taxon>
        <taxon>Brassicales</taxon>
        <taxon>Brassicaceae</taxon>
        <taxon>Camelineae</taxon>
        <taxon>Arabidopsis</taxon>
    </lineage>
</organism>
<name>ANL2_ARATH</name>
<keyword id="KW-0025">Alternative splicing</keyword>
<keyword id="KW-0175">Coiled coil</keyword>
<keyword id="KW-0238">DNA-binding</keyword>
<keyword id="KW-0371">Homeobox</keyword>
<keyword id="KW-0539">Nucleus</keyword>
<keyword id="KW-1185">Reference proteome</keyword>
<keyword id="KW-0804">Transcription</keyword>
<keyword id="KW-0805">Transcription regulation</keyword>